<evidence type="ECO:0000255" key="1">
    <source>
        <dbReference type="HAMAP-Rule" id="MF_00179"/>
    </source>
</evidence>
<gene>
    <name evidence="1" type="primary">ribA</name>
    <name type="ordered locus">SBO_1787</name>
</gene>
<accession>Q31ZX1</accession>
<keyword id="KW-0342">GTP-binding</keyword>
<keyword id="KW-0378">Hydrolase</keyword>
<keyword id="KW-0479">Metal-binding</keyword>
<keyword id="KW-0547">Nucleotide-binding</keyword>
<keyword id="KW-0686">Riboflavin biosynthesis</keyword>
<keyword id="KW-0862">Zinc</keyword>
<proteinExistence type="inferred from homology"/>
<organism>
    <name type="scientific">Shigella boydii serotype 4 (strain Sb227)</name>
    <dbReference type="NCBI Taxonomy" id="300268"/>
    <lineage>
        <taxon>Bacteria</taxon>
        <taxon>Pseudomonadati</taxon>
        <taxon>Pseudomonadota</taxon>
        <taxon>Gammaproteobacteria</taxon>
        <taxon>Enterobacterales</taxon>
        <taxon>Enterobacteriaceae</taxon>
        <taxon>Shigella</taxon>
    </lineage>
</organism>
<comment type="function">
    <text evidence="1">Catalyzes the conversion of GTP to 2,5-diamino-6-ribosylamino-4(3H)-pyrimidinone 5'-phosphate (DARP), formate and pyrophosphate.</text>
</comment>
<comment type="catalytic activity">
    <reaction evidence="1">
        <text>GTP + 4 H2O = 2,5-diamino-6-hydroxy-4-(5-phosphoribosylamino)-pyrimidine + formate + 2 phosphate + 3 H(+)</text>
        <dbReference type="Rhea" id="RHEA:23704"/>
        <dbReference type="ChEBI" id="CHEBI:15377"/>
        <dbReference type="ChEBI" id="CHEBI:15378"/>
        <dbReference type="ChEBI" id="CHEBI:15740"/>
        <dbReference type="ChEBI" id="CHEBI:37565"/>
        <dbReference type="ChEBI" id="CHEBI:43474"/>
        <dbReference type="ChEBI" id="CHEBI:58614"/>
        <dbReference type="EC" id="3.5.4.25"/>
    </reaction>
</comment>
<comment type="cofactor">
    <cofactor evidence="1">
        <name>Zn(2+)</name>
        <dbReference type="ChEBI" id="CHEBI:29105"/>
    </cofactor>
    <text evidence="1">Binds 1 zinc ion per subunit.</text>
</comment>
<comment type="pathway">
    <text evidence="1">Cofactor biosynthesis; riboflavin biosynthesis; 5-amino-6-(D-ribitylamino)uracil from GTP: step 1/4.</text>
</comment>
<comment type="subunit">
    <text evidence="1">Homodimer.</text>
</comment>
<comment type="similarity">
    <text evidence="1">Belongs to the GTP cyclohydrolase II family.</text>
</comment>
<name>RIBA_SHIBS</name>
<sequence length="196" mass="21836">MQLKRVAEAKLPTPWGDFLMVGFEELATGHDHVALVYGDISGHTPVLARVHSECLTGDALFSLRCDCGFQLEAALTQIAEEGRGILLYHRQEGRNIGLLNKIRAYALQDQGYDTVEANHQLGFAADERDFTLCADMFKLLGVNEVRLLTNNPKKVEILTEAGINIVERVPLIVGRNPNNEHYLDTKAEKMGHLLNK</sequence>
<protein>
    <recommendedName>
        <fullName evidence="1">GTP cyclohydrolase-2</fullName>
        <ecNumber evidence="1">3.5.4.25</ecNumber>
    </recommendedName>
    <alternativeName>
        <fullName evidence="1">GTP cyclohydrolase II</fullName>
    </alternativeName>
</protein>
<feature type="chain" id="PRO_1000040589" description="GTP cyclohydrolase-2">
    <location>
        <begin position="1"/>
        <end position="196"/>
    </location>
</feature>
<feature type="active site" description="Proton acceptor" evidence="1">
    <location>
        <position position="126"/>
    </location>
</feature>
<feature type="active site" description="Nucleophile" evidence="1">
    <location>
        <position position="128"/>
    </location>
</feature>
<feature type="binding site" evidence="1">
    <location>
        <begin position="49"/>
        <end position="53"/>
    </location>
    <ligand>
        <name>GTP</name>
        <dbReference type="ChEBI" id="CHEBI:37565"/>
    </ligand>
</feature>
<feature type="binding site" evidence="1">
    <location>
        <position position="54"/>
    </location>
    <ligand>
        <name>Zn(2+)</name>
        <dbReference type="ChEBI" id="CHEBI:29105"/>
        <note>catalytic</note>
    </ligand>
</feature>
<feature type="binding site" evidence="1">
    <location>
        <position position="65"/>
    </location>
    <ligand>
        <name>Zn(2+)</name>
        <dbReference type="ChEBI" id="CHEBI:29105"/>
        <note>catalytic</note>
    </ligand>
</feature>
<feature type="binding site" evidence="1">
    <location>
        <position position="67"/>
    </location>
    <ligand>
        <name>Zn(2+)</name>
        <dbReference type="ChEBI" id="CHEBI:29105"/>
        <note>catalytic</note>
    </ligand>
</feature>
<feature type="binding site" evidence="1">
    <location>
        <position position="70"/>
    </location>
    <ligand>
        <name>GTP</name>
        <dbReference type="ChEBI" id="CHEBI:37565"/>
    </ligand>
</feature>
<feature type="binding site" evidence="1">
    <location>
        <begin position="92"/>
        <end position="94"/>
    </location>
    <ligand>
        <name>GTP</name>
        <dbReference type="ChEBI" id="CHEBI:37565"/>
    </ligand>
</feature>
<feature type="binding site" evidence="1">
    <location>
        <position position="114"/>
    </location>
    <ligand>
        <name>GTP</name>
        <dbReference type="ChEBI" id="CHEBI:37565"/>
    </ligand>
</feature>
<feature type="binding site" evidence="1">
    <location>
        <position position="149"/>
    </location>
    <ligand>
        <name>GTP</name>
        <dbReference type="ChEBI" id="CHEBI:37565"/>
    </ligand>
</feature>
<feature type="binding site" evidence="1">
    <location>
        <position position="154"/>
    </location>
    <ligand>
        <name>GTP</name>
        <dbReference type="ChEBI" id="CHEBI:37565"/>
    </ligand>
</feature>
<dbReference type="EC" id="3.5.4.25" evidence="1"/>
<dbReference type="EMBL" id="CP000036">
    <property type="protein sequence ID" value="ABB66387.1"/>
    <property type="molecule type" value="Genomic_DNA"/>
</dbReference>
<dbReference type="RefSeq" id="WP_001176295.1">
    <property type="nucleotide sequence ID" value="NC_007613.1"/>
</dbReference>
<dbReference type="SMR" id="Q31ZX1"/>
<dbReference type="GeneID" id="86946614"/>
<dbReference type="KEGG" id="sbo:SBO_1787"/>
<dbReference type="HOGENOM" id="CLU_020273_2_1_6"/>
<dbReference type="UniPathway" id="UPA00275">
    <property type="reaction ID" value="UER00400"/>
</dbReference>
<dbReference type="Proteomes" id="UP000007067">
    <property type="component" value="Chromosome"/>
</dbReference>
<dbReference type="GO" id="GO:0005829">
    <property type="term" value="C:cytosol"/>
    <property type="evidence" value="ECO:0007669"/>
    <property type="project" value="TreeGrafter"/>
</dbReference>
<dbReference type="GO" id="GO:0005525">
    <property type="term" value="F:GTP binding"/>
    <property type="evidence" value="ECO:0007669"/>
    <property type="project" value="UniProtKB-KW"/>
</dbReference>
<dbReference type="GO" id="GO:0003935">
    <property type="term" value="F:GTP cyclohydrolase II activity"/>
    <property type="evidence" value="ECO:0007669"/>
    <property type="project" value="UniProtKB-UniRule"/>
</dbReference>
<dbReference type="GO" id="GO:0008270">
    <property type="term" value="F:zinc ion binding"/>
    <property type="evidence" value="ECO:0007669"/>
    <property type="project" value="UniProtKB-UniRule"/>
</dbReference>
<dbReference type="GO" id="GO:0009231">
    <property type="term" value="P:riboflavin biosynthetic process"/>
    <property type="evidence" value="ECO:0007669"/>
    <property type="project" value="UniProtKB-UniRule"/>
</dbReference>
<dbReference type="CDD" id="cd00641">
    <property type="entry name" value="GTP_cyclohydro2"/>
    <property type="match status" value="1"/>
</dbReference>
<dbReference type="FunFam" id="3.40.50.10990:FF:000002">
    <property type="entry name" value="GTP cyclohydrolase-2"/>
    <property type="match status" value="1"/>
</dbReference>
<dbReference type="Gene3D" id="3.40.50.10990">
    <property type="entry name" value="GTP cyclohydrolase II"/>
    <property type="match status" value="1"/>
</dbReference>
<dbReference type="HAMAP" id="MF_00179">
    <property type="entry name" value="RibA"/>
    <property type="match status" value="1"/>
</dbReference>
<dbReference type="InterPro" id="IPR032677">
    <property type="entry name" value="GTP_cyclohydro_II"/>
</dbReference>
<dbReference type="InterPro" id="IPR000926">
    <property type="entry name" value="RibA"/>
</dbReference>
<dbReference type="InterPro" id="IPR036144">
    <property type="entry name" value="RibA-like_sf"/>
</dbReference>
<dbReference type="NCBIfam" id="NF001591">
    <property type="entry name" value="PRK00393.1"/>
    <property type="match status" value="1"/>
</dbReference>
<dbReference type="NCBIfam" id="TIGR00505">
    <property type="entry name" value="ribA"/>
    <property type="match status" value="1"/>
</dbReference>
<dbReference type="PANTHER" id="PTHR21327:SF18">
    <property type="entry name" value="3,4-DIHYDROXY-2-BUTANONE 4-PHOSPHATE SYNTHASE"/>
    <property type="match status" value="1"/>
</dbReference>
<dbReference type="PANTHER" id="PTHR21327">
    <property type="entry name" value="GTP CYCLOHYDROLASE II-RELATED"/>
    <property type="match status" value="1"/>
</dbReference>
<dbReference type="Pfam" id="PF00925">
    <property type="entry name" value="GTP_cyclohydro2"/>
    <property type="match status" value="1"/>
</dbReference>
<dbReference type="SUPFAM" id="SSF142695">
    <property type="entry name" value="RibA-like"/>
    <property type="match status" value="1"/>
</dbReference>
<reference key="1">
    <citation type="journal article" date="2005" name="Nucleic Acids Res.">
        <title>Genome dynamics and diversity of Shigella species, the etiologic agents of bacillary dysentery.</title>
        <authorList>
            <person name="Yang F."/>
            <person name="Yang J."/>
            <person name="Zhang X."/>
            <person name="Chen L."/>
            <person name="Jiang Y."/>
            <person name="Yan Y."/>
            <person name="Tang X."/>
            <person name="Wang J."/>
            <person name="Xiong Z."/>
            <person name="Dong J."/>
            <person name="Xue Y."/>
            <person name="Zhu Y."/>
            <person name="Xu X."/>
            <person name="Sun L."/>
            <person name="Chen S."/>
            <person name="Nie H."/>
            <person name="Peng J."/>
            <person name="Xu J."/>
            <person name="Wang Y."/>
            <person name="Yuan Z."/>
            <person name="Wen Y."/>
            <person name="Yao Z."/>
            <person name="Shen Y."/>
            <person name="Qiang B."/>
            <person name="Hou Y."/>
            <person name="Yu J."/>
            <person name="Jin Q."/>
        </authorList>
    </citation>
    <scope>NUCLEOTIDE SEQUENCE [LARGE SCALE GENOMIC DNA]</scope>
    <source>
        <strain>Sb227</strain>
    </source>
</reference>